<comment type="function">
    <text evidence="1">Cell wall formation. Adds enolpyruvyl to UDP-N-acetylglucosamine.</text>
</comment>
<comment type="catalytic activity">
    <reaction evidence="1">
        <text>phosphoenolpyruvate + UDP-N-acetyl-alpha-D-glucosamine = UDP-N-acetyl-3-O-(1-carboxyvinyl)-alpha-D-glucosamine + phosphate</text>
        <dbReference type="Rhea" id="RHEA:18681"/>
        <dbReference type="ChEBI" id="CHEBI:43474"/>
        <dbReference type="ChEBI" id="CHEBI:57705"/>
        <dbReference type="ChEBI" id="CHEBI:58702"/>
        <dbReference type="ChEBI" id="CHEBI:68483"/>
        <dbReference type="EC" id="2.5.1.7"/>
    </reaction>
</comment>
<comment type="pathway">
    <text evidence="1">Cell wall biogenesis; peptidoglycan biosynthesis.</text>
</comment>
<comment type="subcellular location">
    <subcellularLocation>
        <location evidence="1">Cytoplasm</location>
    </subcellularLocation>
</comment>
<comment type="similarity">
    <text evidence="1">Belongs to the EPSP synthase family. MurA subfamily.</text>
</comment>
<gene>
    <name evidence="1" type="primary">murA2</name>
    <name type="synonym">murZ</name>
    <name type="ordered locus">spyM18_1371</name>
</gene>
<proteinExistence type="inferred from homology"/>
<accession>Q8P0G7</accession>
<keyword id="KW-0131">Cell cycle</keyword>
<keyword id="KW-0132">Cell division</keyword>
<keyword id="KW-0133">Cell shape</keyword>
<keyword id="KW-0961">Cell wall biogenesis/degradation</keyword>
<keyword id="KW-0963">Cytoplasm</keyword>
<keyword id="KW-0573">Peptidoglycan synthesis</keyword>
<keyword id="KW-0670">Pyruvate</keyword>
<keyword id="KW-0808">Transferase</keyword>
<dbReference type="EC" id="2.5.1.7" evidence="1"/>
<dbReference type="EMBL" id="AE009949">
    <property type="protein sequence ID" value="AAL97966.1"/>
    <property type="molecule type" value="Genomic_DNA"/>
</dbReference>
<dbReference type="RefSeq" id="WP_002984086.1">
    <property type="nucleotide sequence ID" value="NC_003485.1"/>
</dbReference>
<dbReference type="SMR" id="Q8P0G7"/>
<dbReference type="KEGG" id="spm:spyM18_1371"/>
<dbReference type="HOGENOM" id="CLU_027387_0_0_9"/>
<dbReference type="UniPathway" id="UPA00219"/>
<dbReference type="GO" id="GO:0005737">
    <property type="term" value="C:cytoplasm"/>
    <property type="evidence" value="ECO:0007669"/>
    <property type="project" value="UniProtKB-SubCell"/>
</dbReference>
<dbReference type="GO" id="GO:0008760">
    <property type="term" value="F:UDP-N-acetylglucosamine 1-carboxyvinyltransferase activity"/>
    <property type="evidence" value="ECO:0007669"/>
    <property type="project" value="UniProtKB-UniRule"/>
</dbReference>
<dbReference type="GO" id="GO:0051301">
    <property type="term" value="P:cell division"/>
    <property type="evidence" value="ECO:0007669"/>
    <property type="project" value="UniProtKB-KW"/>
</dbReference>
<dbReference type="GO" id="GO:0071555">
    <property type="term" value="P:cell wall organization"/>
    <property type="evidence" value="ECO:0007669"/>
    <property type="project" value="UniProtKB-KW"/>
</dbReference>
<dbReference type="GO" id="GO:0009252">
    <property type="term" value="P:peptidoglycan biosynthetic process"/>
    <property type="evidence" value="ECO:0007669"/>
    <property type="project" value="UniProtKB-UniRule"/>
</dbReference>
<dbReference type="GO" id="GO:0008360">
    <property type="term" value="P:regulation of cell shape"/>
    <property type="evidence" value="ECO:0007669"/>
    <property type="project" value="UniProtKB-KW"/>
</dbReference>
<dbReference type="GO" id="GO:0019277">
    <property type="term" value="P:UDP-N-acetylgalactosamine biosynthetic process"/>
    <property type="evidence" value="ECO:0007669"/>
    <property type="project" value="InterPro"/>
</dbReference>
<dbReference type="CDD" id="cd01555">
    <property type="entry name" value="UdpNAET"/>
    <property type="match status" value="1"/>
</dbReference>
<dbReference type="FunFam" id="3.65.10.10:FF:000001">
    <property type="entry name" value="UDP-N-acetylglucosamine 1-carboxyvinyltransferase"/>
    <property type="match status" value="1"/>
</dbReference>
<dbReference type="Gene3D" id="3.65.10.10">
    <property type="entry name" value="Enolpyruvate transferase domain"/>
    <property type="match status" value="2"/>
</dbReference>
<dbReference type="HAMAP" id="MF_00111">
    <property type="entry name" value="MurA"/>
    <property type="match status" value="1"/>
</dbReference>
<dbReference type="InterPro" id="IPR001986">
    <property type="entry name" value="Enolpyruvate_Tfrase_dom"/>
</dbReference>
<dbReference type="InterPro" id="IPR036968">
    <property type="entry name" value="Enolpyruvate_Tfrase_sf"/>
</dbReference>
<dbReference type="InterPro" id="IPR050068">
    <property type="entry name" value="MurA_subfamily"/>
</dbReference>
<dbReference type="InterPro" id="IPR013792">
    <property type="entry name" value="RNA3'P_cycl/enolpyr_Trfase_a/b"/>
</dbReference>
<dbReference type="InterPro" id="IPR005750">
    <property type="entry name" value="UDP_GlcNAc_COvinyl_MurA"/>
</dbReference>
<dbReference type="NCBIfam" id="TIGR01072">
    <property type="entry name" value="murA"/>
    <property type="match status" value="1"/>
</dbReference>
<dbReference type="NCBIfam" id="NF006873">
    <property type="entry name" value="PRK09369.1"/>
    <property type="match status" value="1"/>
</dbReference>
<dbReference type="NCBIfam" id="NF009470">
    <property type="entry name" value="PRK12830.1"/>
    <property type="match status" value="1"/>
</dbReference>
<dbReference type="PANTHER" id="PTHR43783">
    <property type="entry name" value="UDP-N-ACETYLGLUCOSAMINE 1-CARBOXYVINYLTRANSFERASE"/>
    <property type="match status" value="1"/>
</dbReference>
<dbReference type="PANTHER" id="PTHR43783:SF2">
    <property type="entry name" value="UDP-N-ACETYLGLUCOSAMINE 1-CARBOXYVINYLTRANSFERASE 2"/>
    <property type="match status" value="1"/>
</dbReference>
<dbReference type="Pfam" id="PF00275">
    <property type="entry name" value="EPSP_synthase"/>
    <property type="match status" value="1"/>
</dbReference>
<dbReference type="SUPFAM" id="SSF55205">
    <property type="entry name" value="EPT/RTPC-like"/>
    <property type="match status" value="1"/>
</dbReference>
<reference key="1">
    <citation type="journal article" date="2002" name="Proc. Natl. Acad. Sci. U.S.A.">
        <title>Genome sequence and comparative microarray analysis of serotype M18 group A Streptococcus strains associated with acute rheumatic fever outbreaks.</title>
        <authorList>
            <person name="Smoot J.C."/>
            <person name="Barbian K.D."/>
            <person name="Van Gompel J.J."/>
            <person name="Smoot L.M."/>
            <person name="Chaussee M.S."/>
            <person name="Sylva G.L."/>
            <person name="Sturdevant D.E."/>
            <person name="Ricklefs S.M."/>
            <person name="Porcella S.F."/>
            <person name="Parkins L.D."/>
            <person name="Beres S.B."/>
            <person name="Campbell D.S."/>
            <person name="Smith T.M."/>
            <person name="Zhang Q."/>
            <person name="Kapur V."/>
            <person name="Daly J.A."/>
            <person name="Veasy L.G."/>
            <person name="Musser J.M."/>
        </authorList>
    </citation>
    <scope>NUCLEOTIDE SEQUENCE [LARGE SCALE GENOMIC DNA]</scope>
    <source>
        <strain>MGAS8232</strain>
    </source>
</reference>
<evidence type="ECO:0000255" key="1">
    <source>
        <dbReference type="HAMAP-Rule" id="MF_00111"/>
    </source>
</evidence>
<sequence>MRKIIINGGKALSGEVAVSGAKNSVVALIPAIILADDIVILDGVPAISDVDSLIEIMELMGATVNYHGDTLEIDPRGVQDIPMPYGKINSLRASYYFYGSLLGRFGQAVVGLPGGCDLGPRPIDLHLKAFEAMGVEVSYEGENMNLSTNGQKIHGAHIYMDTVSVGATINTMVAATKAQGKTVIENAAREPEIIDVATLLNNMGAHIRGAGTDIITIQGVQKLHGTRHQVIPDRIEAGTYIALAAAIGKGIKITNVLYEHLESFIAKLEEMGVRMTVEEDAIFVEKQESLKAITIKTSPYPGFATDLQQPLTPLLLKADGRGTIIDTIYEKRINHVPELMRMGADISVIGGQIVYQGPSRLTGAQVKATDLRAGAALVTAGLMAEGKTEITNIEFILRGYASIIAKLTALGADIQLIED</sequence>
<name>MURA2_STRP8</name>
<protein>
    <recommendedName>
        <fullName evidence="1">UDP-N-acetylglucosamine 1-carboxyvinyltransferase 2</fullName>
        <ecNumber evidence="1">2.5.1.7</ecNumber>
    </recommendedName>
    <alternativeName>
        <fullName evidence="1">Enoylpyruvate transferase 2</fullName>
    </alternativeName>
    <alternativeName>
        <fullName evidence="1">UDP-N-acetylglucosamine enolpyruvyl transferase 2</fullName>
        <shortName evidence="1">EPT 2</shortName>
    </alternativeName>
</protein>
<organism>
    <name type="scientific">Streptococcus pyogenes serotype M18 (strain MGAS8232)</name>
    <dbReference type="NCBI Taxonomy" id="186103"/>
    <lineage>
        <taxon>Bacteria</taxon>
        <taxon>Bacillati</taxon>
        <taxon>Bacillota</taxon>
        <taxon>Bacilli</taxon>
        <taxon>Lactobacillales</taxon>
        <taxon>Streptococcaceae</taxon>
        <taxon>Streptococcus</taxon>
    </lineage>
</organism>
<feature type="chain" id="PRO_0000178941" description="UDP-N-acetylglucosamine 1-carboxyvinyltransferase 2">
    <location>
        <begin position="1"/>
        <end position="419"/>
    </location>
</feature>
<feature type="active site" description="Proton donor" evidence="1">
    <location>
        <position position="116"/>
    </location>
</feature>
<feature type="binding site" evidence="1">
    <location>
        <begin position="22"/>
        <end position="23"/>
    </location>
    <ligand>
        <name>phosphoenolpyruvate</name>
        <dbReference type="ChEBI" id="CHEBI:58702"/>
    </ligand>
</feature>
<feature type="binding site" evidence="1">
    <location>
        <position position="92"/>
    </location>
    <ligand>
        <name>UDP-N-acetyl-alpha-D-glucosamine</name>
        <dbReference type="ChEBI" id="CHEBI:57705"/>
    </ligand>
</feature>
<feature type="binding site" evidence="1">
    <location>
        <begin position="121"/>
        <end position="125"/>
    </location>
    <ligand>
        <name>UDP-N-acetyl-alpha-D-glucosamine</name>
        <dbReference type="ChEBI" id="CHEBI:57705"/>
    </ligand>
</feature>
<feature type="binding site" evidence="1">
    <location>
        <position position="306"/>
    </location>
    <ligand>
        <name>UDP-N-acetyl-alpha-D-glucosamine</name>
        <dbReference type="ChEBI" id="CHEBI:57705"/>
    </ligand>
</feature>
<feature type="binding site" evidence="1">
    <location>
        <position position="328"/>
    </location>
    <ligand>
        <name>UDP-N-acetyl-alpha-D-glucosamine</name>
        <dbReference type="ChEBI" id="CHEBI:57705"/>
    </ligand>
</feature>
<feature type="modified residue" description="2-(S-cysteinyl)pyruvic acid O-phosphothioketal" evidence="1">
    <location>
        <position position="116"/>
    </location>
</feature>